<dbReference type="EMBL" id="BX950229">
    <property type="protein sequence ID" value="CAF30983.1"/>
    <property type="molecule type" value="Genomic_DNA"/>
</dbReference>
<dbReference type="RefSeq" id="WP_011171371.1">
    <property type="nucleotide sequence ID" value="NC_005791.1"/>
</dbReference>
<dbReference type="SMR" id="Q6LXC5"/>
<dbReference type="STRING" id="267377.MMP1427"/>
<dbReference type="EnsemblBacteria" id="CAF30983">
    <property type="protein sequence ID" value="CAF30983"/>
    <property type="gene ID" value="MMP1427"/>
</dbReference>
<dbReference type="GeneID" id="2761424"/>
<dbReference type="KEGG" id="mmp:MMP1427"/>
<dbReference type="PATRIC" id="fig|267377.15.peg.1463"/>
<dbReference type="eggNOG" id="arCOG04321">
    <property type="taxonomic scope" value="Archaea"/>
</dbReference>
<dbReference type="HOGENOM" id="CLU_048704_0_0_2"/>
<dbReference type="OrthoDB" id="21376at2157"/>
<dbReference type="Proteomes" id="UP000000590">
    <property type="component" value="Chromosome"/>
</dbReference>
<dbReference type="CDD" id="cd08025">
    <property type="entry name" value="RNR_PFL_like_DUF711"/>
    <property type="match status" value="1"/>
</dbReference>
<dbReference type="Gene3D" id="3.20.70.20">
    <property type="match status" value="1"/>
</dbReference>
<dbReference type="HAMAP" id="MF_01221">
    <property type="entry name" value="UPF0210"/>
    <property type="match status" value="1"/>
</dbReference>
<dbReference type="InterPro" id="IPR007841">
    <property type="entry name" value="UPF0210"/>
</dbReference>
<dbReference type="NCBIfam" id="NF003700">
    <property type="entry name" value="PRK05313.1"/>
    <property type="match status" value="1"/>
</dbReference>
<dbReference type="PANTHER" id="PTHR37560:SF1">
    <property type="entry name" value="UPF0210 PROTEIN MJ1665"/>
    <property type="match status" value="1"/>
</dbReference>
<dbReference type="PANTHER" id="PTHR37560">
    <property type="entry name" value="UPF0210 PROTEIN SPR0218"/>
    <property type="match status" value="1"/>
</dbReference>
<dbReference type="Pfam" id="PF05167">
    <property type="entry name" value="DUF711"/>
    <property type="match status" value="1"/>
</dbReference>
<dbReference type="SUPFAM" id="SSF51998">
    <property type="entry name" value="PFL-like glycyl radical enzymes"/>
    <property type="match status" value="1"/>
</dbReference>
<keyword id="KW-1185">Reference proteome</keyword>
<organism>
    <name type="scientific">Methanococcus maripaludis (strain DSM 14266 / JCM 13030 / NBRC 101832 / S2 / LL)</name>
    <dbReference type="NCBI Taxonomy" id="267377"/>
    <lineage>
        <taxon>Archaea</taxon>
        <taxon>Methanobacteriati</taxon>
        <taxon>Methanobacteriota</taxon>
        <taxon>Methanomada group</taxon>
        <taxon>Methanococci</taxon>
        <taxon>Methanococcales</taxon>
        <taxon>Methanococcaceae</taxon>
        <taxon>Methanococcus</taxon>
    </lineage>
</organism>
<name>Y1427_METMP</name>
<reference key="1">
    <citation type="journal article" date="2004" name="J. Bacteriol.">
        <title>Complete genome sequence of the genetically tractable hydrogenotrophic methanogen Methanococcus maripaludis.</title>
        <authorList>
            <person name="Hendrickson E.L."/>
            <person name="Kaul R."/>
            <person name="Zhou Y."/>
            <person name="Bovee D."/>
            <person name="Chapman P."/>
            <person name="Chung J."/>
            <person name="Conway de Macario E."/>
            <person name="Dodsworth J.A."/>
            <person name="Gillett W."/>
            <person name="Graham D.E."/>
            <person name="Hackett M."/>
            <person name="Haydock A.K."/>
            <person name="Kang A."/>
            <person name="Land M.L."/>
            <person name="Levy R."/>
            <person name="Lie T.J."/>
            <person name="Major T.A."/>
            <person name="Moore B.C."/>
            <person name="Porat I."/>
            <person name="Palmeiri A."/>
            <person name="Rouse G."/>
            <person name="Saenphimmachak C."/>
            <person name="Soell D."/>
            <person name="Van Dien S."/>
            <person name="Wang T."/>
            <person name="Whitman W.B."/>
            <person name="Xia Q."/>
            <person name="Zhang Y."/>
            <person name="Larimer F.W."/>
            <person name="Olson M.V."/>
            <person name="Leigh J.A."/>
        </authorList>
    </citation>
    <scope>NUCLEOTIDE SEQUENCE [LARGE SCALE GENOMIC DNA]</scope>
    <source>
        <strain>DSM 14266 / JCM 13030 / NBRC 101832 / S2 / LL</strain>
    </source>
</reference>
<protein>
    <recommendedName>
        <fullName evidence="1">UPF0210 protein MMP1427</fullName>
    </recommendedName>
</protein>
<sequence length="458" mass="48085">MFVPEEIIETIKMIEYQNLDIRTTTLGINLKDCADKDLDLLKENIYDKITSLGGNLVETANKVSQKYGIPIVNKRISVTPIGLIMGSTVKGLSDEEAVDACVEVGITLDKIAKEVGVDFIGGYSALVQKRATYEEKMLIRSIPKLMTKTDKVCASVNVATTKAGINMYAVKKMGEIVKETSEITKDAIGCAKIVVFCNAPEDNPFMAGAFHGPGEGDAVINAGVSGPGVVRAVVEQLKGKDIGTVSDEIKKTAFKITRMGELVGKEVANELGVNFGIVDLSLAPTPAIGDSIANILEAVGLERCGTHGTTAALAMLNDAVKKGGAMASSNVGGLSGAFIPVSEDAGMIEAVEVGALRLEKLEAMTCVCSVGLDMIAVPGKTPASTLSAIMADEMAIGMINKKTTAVRIIPVPGKDVGDYVEYGGLLGTAPIMPVSEFSSEELIERGGRIPAPIQSLTN</sequence>
<gene>
    <name type="ordered locus">MMP1427</name>
</gene>
<evidence type="ECO:0000255" key="1">
    <source>
        <dbReference type="HAMAP-Rule" id="MF_01221"/>
    </source>
</evidence>
<feature type="chain" id="PRO_1000066768" description="UPF0210 protein MMP1427">
    <location>
        <begin position="1"/>
        <end position="458"/>
    </location>
</feature>
<proteinExistence type="inferred from homology"/>
<comment type="similarity">
    <text evidence="1">Belongs to the UPF0210 family.</text>
</comment>
<accession>Q6LXC5</accession>